<evidence type="ECO:0000250" key="1"/>
<evidence type="ECO:0000250" key="2">
    <source>
        <dbReference type="UniProtKB" id="P03495"/>
    </source>
</evidence>
<evidence type="ECO:0000305" key="3"/>
<feature type="chain" id="PRO_0000078946" description="Non-structural protein 1">
    <location>
        <begin position="1"/>
        <end position="89" status="greater than"/>
    </location>
</feature>
<feature type="region of interest" description="RNA-binding and homodimerization" evidence="1">
    <location>
        <begin position="1"/>
        <end position="73"/>
    </location>
</feature>
<feature type="short sequence motif" description="Nuclear localization signal 1" evidence="1">
    <location>
        <begin position="34"/>
        <end position="38"/>
    </location>
</feature>
<feature type="non-terminal residue">
    <location>
        <position position="89"/>
    </location>
</feature>
<keyword id="KW-0025">Alternative splicing</keyword>
<keyword id="KW-1262">Eukaryotic host gene expression shutoff by virus</keyword>
<keyword id="KW-1035">Host cytoplasm</keyword>
<keyword id="KW-1190">Host gene expression shutoff by virus</keyword>
<keyword id="KW-1192">Host mRNA suppression by virus</keyword>
<keyword id="KW-1048">Host nucleus</keyword>
<keyword id="KW-0945">Host-virus interaction</keyword>
<keyword id="KW-1090">Inhibition of host innate immune response by virus</keyword>
<keyword id="KW-1103">Inhibition of host pre-mRNA processing by virus</keyword>
<keyword id="KW-0922">Interferon antiviral system evasion</keyword>
<keyword id="KW-0694">RNA-binding</keyword>
<keyword id="KW-0899">Viral immunoevasion</keyword>
<sequence length="89" mass="10080">MDPNTVSSFQVDCFLWHVRKQVADQELGDAPFLDRLRRDQKSLRGRGSTLGLNIETATRVGKQIVERILKEESDEALKMTMASAPASRY</sequence>
<accession>Q84056</accession>
<accession>P03497</accession>
<proteinExistence type="inferred from homology"/>
<dbReference type="EMBL" id="J02157">
    <property type="protein sequence ID" value="AAA43532.1"/>
    <property type="molecule type" value="Genomic_RNA"/>
</dbReference>
<dbReference type="SMR" id="Q84056"/>
<dbReference type="GO" id="GO:0030430">
    <property type="term" value="C:host cell cytoplasm"/>
    <property type="evidence" value="ECO:0007669"/>
    <property type="project" value="UniProtKB-SubCell"/>
</dbReference>
<dbReference type="GO" id="GO:0042025">
    <property type="term" value="C:host cell nucleus"/>
    <property type="evidence" value="ECO:0007669"/>
    <property type="project" value="UniProtKB-SubCell"/>
</dbReference>
<dbReference type="GO" id="GO:0003723">
    <property type="term" value="F:RNA binding"/>
    <property type="evidence" value="ECO:0007669"/>
    <property type="project" value="UniProtKB-KW"/>
</dbReference>
<dbReference type="GO" id="GO:0039657">
    <property type="term" value="P:symbiont-mediated suppression of host gene expression"/>
    <property type="evidence" value="ECO:0007669"/>
    <property type="project" value="UniProtKB-KW"/>
</dbReference>
<dbReference type="GO" id="GO:0052170">
    <property type="term" value="P:symbiont-mediated suppression of host innate immune response"/>
    <property type="evidence" value="ECO:0007669"/>
    <property type="project" value="UniProtKB-KW"/>
</dbReference>
<dbReference type="GO" id="GO:0039524">
    <property type="term" value="P:symbiont-mediated suppression of host mRNA processing"/>
    <property type="evidence" value="ECO:0007669"/>
    <property type="project" value="UniProtKB-KW"/>
</dbReference>
<dbReference type="FunFam" id="1.10.287.10:FF:000001">
    <property type="entry name" value="Non-structural protein 1"/>
    <property type="match status" value="1"/>
</dbReference>
<dbReference type="Gene3D" id="1.10.287.10">
    <property type="entry name" value="S15/NS1, RNA-binding"/>
    <property type="match status" value="1"/>
</dbReference>
<dbReference type="InterPro" id="IPR000256">
    <property type="entry name" value="NS1A"/>
</dbReference>
<dbReference type="InterPro" id="IPR009068">
    <property type="entry name" value="uS15_NS1_RNA-bd_sf"/>
</dbReference>
<dbReference type="Pfam" id="PF00600">
    <property type="entry name" value="Flu_NS1"/>
    <property type="match status" value="1"/>
</dbReference>
<dbReference type="SUPFAM" id="SSF47060">
    <property type="entry name" value="S15/NS1 RNA-binding domain"/>
    <property type="match status" value="1"/>
</dbReference>
<comment type="function">
    <text evidence="2">Inhibits post-transcriptional processing of cellular pre-mRNA, by binding and inhibiting two cellular proteins that are required for the 3'-end processing of cellular pre-mRNAs: the 30 kDa cleavage and polyadenylation specificity factor (CPSF4) and the poly(A)-binding protein 2 (PABPN1). This results in the accumulation of unprocessed 3' end pre-mRNAs which can't be exported from the nucleus. Cellular protein synthesis is thereby shut off very early after virus infection. Viral protein synthesis is not affected by the inhibition of the cellular 3' end processing machinery because the poly(A) tails of viral mRNAs are produced by the viral polymerase through a stuttering mechanism. Prevents the establishment of the cellular antiviral state by inhibiting TRIM25-mediated RIGI ubiquitination, which normally triggers the antiviral transduction signal that leads to the activation of type I IFN genes by transcription factors IRF3 and IRF7. Also binds poly(A) and U6 snRNA. Inhibits the integrated stress response (ISR) in the infected cell by blocking dsRNA binding by EIF2AK2/PKR and further phosphorylation of EIF2S1/EIF-2ALPHA. Stress granule formation is thus inhibited, which allows protein synthesis and viral replication.</text>
</comment>
<comment type="subunit">
    <text evidence="1">Homodimer. Interacts with host TRIM25 (via coiled coil); this interaction specifically inhibits TRIM25 multimerization and TRIM25-mediated RIGI CARD ubiquitination. Interacts with human EIF2AK2/PKR, CPSF4, IVNS1ABP and PABPN1 (By similarity).</text>
</comment>
<comment type="subcellular location">
    <subcellularLocation>
        <location>Host nucleus</location>
    </subcellularLocation>
    <subcellularLocation>
        <location>Host cytoplasm</location>
    </subcellularLocation>
    <text evidence="1">In uninfected, transfected cells, NS1 is localized in the nucleus. Only in virus infected cells, the nuclear export signal is unveiled, presumably by a viral protein, and a fraction of NS1 is exported in the cytoplasm (By similarity).</text>
</comment>
<comment type="alternative products">
    <event type="alternative splicing"/>
    <isoform>
        <id>Q84056-1</id>
        <name>NS1</name>
        <sequence type="displayed"/>
    </isoform>
    <isoform>
        <id>Q84056-2</id>
        <name>NEP</name>
        <name>NS2</name>
        <sequence type="not described"/>
    </isoform>
</comment>
<comment type="domain">
    <text evidence="1">The dsRNA-binding region is required for suppression of RNA silencing.</text>
</comment>
<comment type="similarity">
    <text evidence="3">Belongs to the influenza A viruses NS1 family.</text>
</comment>
<organism>
    <name type="scientific">Influenza A virus (strain A/RI/5-/1957 H2N2)</name>
    <dbReference type="NCBI Taxonomy" id="382828"/>
    <lineage>
        <taxon>Viruses</taxon>
        <taxon>Riboviria</taxon>
        <taxon>Orthornavirae</taxon>
        <taxon>Negarnaviricota</taxon>
        <taxon>Polyploviricotina</taxon>
        <taxon>Insthoviricetes</taxon>
        <taxon>Articulavirales</taxon>
        <taxon>Orthomyxoviridae</taxon>
        <taxon>Alphainfluenzavirus</taxon>
        <taxon>Alphainfluenzavirus influenzae</taxon>
        <taxon>Influenza A virus</taxon>
    </lineage>
</organism>
<name>NS1_I57A4</name>
<reference key="1">
    <citation type="journal article" date="1981" name="J. Virol.">
        <title>Variation in nucleotide sequences coding for the N-terminal regions of the matrix and nonstructural proteins of influenza A viruses.</title>
        <authorList>
            <person name="Hall R.M."/>
            <person name="Air G.M."/>
        </authorList>
    </citation>
    <scope>NUCLEOTIDE SEQUENCE [GENOMIC RNA]</scope>
</reference>
<reference key="2">
    <citation type="journal article" date="2003" name="Virology">
        <title>Intracellular warfare between human influenza viruses and human cells: the roles of the viral NS1 protein.</title>
        <authorList>
            <person name="Krug R.M."/>
            <person name="Yuan W."/>
            <person name="Noah D.L."/>
            <person name="Latham A.G."/>
        </authorList>
    </citation>
    <scope>REVIEW</scope>
</reference>
<organismHost>
    <name type="scientific">Aves</name>
    <dbReference type="NCBI Taxonomy" id="8782"/>
</organismHost>
<organismHost>
    <name type="scientific">Homo sapiens</name>
    <name type="common">Human</name>
    <dbReference type="NCBI Taxonomy" id="9606"/>
</organismHost>
<protein>
    <recommendedName>
        <fullName>Non-structural protein 1</fullName>
        <shortName>NS1</shortName>
    </recommendedName>
    <alternativeName>
        <fullName>NS1A</fullName>
    </alternativeName>
</protein>
<gene>
    <name type="primary">NS</name>
</gene>